<name>ATPA1_GLUOX</name>
<feature type="chain" id="PRO_0000238258" description="ATP synthase subunit alpha 1">
    <location>
        <begin position="1"/>
        <end position="511"/>
    </location>
</feature>
<feature type="binding site" evidence="1">
    <location>
        <begin position="170"/>
        <end position="177"/>
    </location>
    <ligand>
        <name>ATP</name>
        <dbReference type="ChEBI" id="CHEBI:30616"/>
    </ligand>
</feature>
<feature type="site" description="Required for activity" evidence="1">
    <location>
        <position position="371"/>
    </location>
</feature>
<comment type="function">
    <text evidence="1">Produces ATP from ADP in the presence of a proton gradient across the membrane. The alpha chain is a regulatory subunit.</text>
</comment>
<comment type="catalytic activity">
    <reaction evidence="1">
        <text>ATP + H2O + 4 H(+)(in) = ADP + phosphate + 5 H(+)(out)</text>
        <dbReference type="Rhea" id="RHEA:57720"/>
        <dbReference type="ChEBI" id="CHEBI:15377"/>
        <dbReference type="ChEBI" id="CHEBI:15378"/>
        <dbReference type="ChEBI" id="CHEBI:30616"/>
        <dbReference type="ChEBI" id="CHEBI:43474"/>
        <dbReference type="ChEBI" id="CHEBI:456216"/>
        <dbReference type="EC" id="7.1.2.2"/>
    </reaction>
</comment>
<comment type="subunit">
    <text evidence="1">F-type ATPases have 2 components, CF(1) - the catalytic core - and CF(0) - the membrane proton channel. CF(1) has five subunits: alpha(3), beta(3), gamma(1), delta(1), epsilon(1). CF(0) has three main subunits: a(1), b(2) and c(9-12). The alpha and beta chains form an alternating ring which encloses part of the gamma chain. CF(1) is attached to CF(0) by a central stalk formed by the gamma and epsilon chains, while a peripheral stalk is formed by the delta and b chains.</text>
</comment>
<comment type="subcellular location">
    <subcellularLocation>
        <location evidence="1">Cell inner membrane</location>
        <topology evidence="1">Peripheral membrane protein</topology>
    </subcellularLocation>
</comment>
<comment type="similarity">
    <text evidence="1">Belongs to the ATPase alpha/beta chains family.</text>
</comment>
<accession>Q5FRC7</accession>
<organism>
    <name type="scientific">Gluconobacter oxydans (strain 621H)</name>
    <name type="common">Gluconobacter suboxydans</name>
    <dbReference type="NCBI Taxonomy" id="290633"/>
    <lineage>
        <taxon>Bacteria</taxon>
        <taxon>Pseudomonadati</taxon>
        <taxon>Pseudomonadota</taxon>
        <taxon>Alphaproteobacteria</taxon>
        <taxon>Acetobacterales</taxon>
        <taxon>Acetobacteraceae</taxon>
        <taxon>Gluconobacter</taxon>
    </lineage>
</organism>
<keyword id="KW-0066">ATP synthesis</keyword>
<keyword id="KW-0067">ATP-binding</keyword>
<keyword id="KW-0997">Cell inner membrane</keyword>
<keyword id="KW-1003">Cell membrane</keyword>
<keyword id="KW-0139">CF(1)</keyword>
<keyword id="KW-0375">Hydrogen ion transport</keyword>
<keyword id="KW-0406">Ion transport</keyword>
<keyword id="KW-0472">Membrane</keyword>
<keyword id="KW-0547">Nucleotide-binding</keyword>
<keyword id="KW-1185">Reference proteome</keyword>
<keyword id="KW-1278">Translocase</keyword>
<keyword id="KW-0813">Transport</keyword>
<reference key="1">
    <citation type="journal article" date="2005" name="Nat. Biotechnol.">
        <title>Complete genome sequence of the acetic acid bacterium Gluconobacter oxydans.</title>
        <authorList>
            <person name="Prust C."/>
            <person name="Hoffmeister M."/>
            <person name="Liesegang H."/>
            <person name="Wiezer A."/>
            <person name="Fricke W.F."/>
            <person name="Ehrenreich A."/>
            <person name="Gottschalk G."/>
            <person name="Deppenmeier U."/>
        </authorList>
    </citation>
    <scope>NUCLEOTIDE SEQUENCE [LARGE SCALE GENOMIC DNA]</scope>
    <source>
        <strain>621H</strain>
    </source>
</reference>
<evidence type="ECO:0000255" key="1">
    <source>
        <dbReference type="HAMAP-Rule" id="MF_01346"/>
    </source>
</evidence>
<gene>
    <name evidence="1" type="primary">atpA1</name>
    <name type="ordered locus">GOX1311</name>
</gene>
<dbReference type="EC" id="7.1.2.2" evidence="1"/>
<dbReference type="EMBL" id="CP000009">
    <property type="protein sequence ID" value="AAW61069.1"/>
    <property type="molecule type" value="Genomic_DNA"/>
</dbReference>
<dbReference type="RefSeq" id="WP_011252861.1">
    <property type="nucleotide sequence ID" value="NC_006677.1"/>
</dbReference>
<dbReference type="SMR" id="Q5FRC7"/>
<dbReference type="STRING" id="290633.GOX1311"/>
<dbReference type="KEGG" id="gox:GOX1311"/>
<dbReference type="eggNOG" id="COG0056">
    <property type="taxonomic scope" value="Bacteria"/>
</dbReference>
<dbReference type="HOGENOM" id="CLU_010091_2_1_5"/>
<dbReference type="Proteomes" id="UP000006375">
    <property type="component" value="Chromosome"/>
</dbReference>
<dbReference type="GO" id="GO:0005886">
    <property type="term" value="C:plasma membrane"/>
    <property type="evidence" value="ECO:0007669"/>
    <property type="project" value="UniProtKB-SubCell"/>
</dbReference>
<dbReference type="GO" id="GO:0045259">
    <property type="term" value="C:proton-transporting ATP synthase complex"/>
    <property type="evidence" value="ECO:0007669"/>
    <property type="project" value="UniProtKB-KW"/>
</dbReference>
<dbReference type="GO" id="GO:0043531">
    <property type="term" value="F:ADP binding"/>
    <property type="evidence" value="ECO:0007669"/>
    <property type="project" value="TreeGrafter"/>
</dbReference>
<dbReference type="GO" id="GO:0005524">
    <property type="term" value="F:ATP binding"/>
    <property type="evidence" value="ECO:0007669"/>
    <property type="project" value="UniProtKB-UniRule"/>
</dbReference>
<dbReference type="GO" id="GO:0046933">
    <property type="term" value="F:proton-transporting ATP synthase activity, rotational mechanism"/>
    <property type="evidence" value="ECO:0007669"/>
    <property type="project" value="UniProtKB-UniRule"/>
</dbReference>
<dbReference type="CDD" id="cd18113">
    <property type="entry name" value="ATP-synt_F1_alpha_C"/>
    <property type="match status" value="1"/>
</dbReference>
<dbReference type="CDD" id="cd18116">
    <property type="entry name" value="ATP-synt_F1_alpha_N"/>
    <property type="match status" value="1"/>
</dbReference>
<dbReference type="CDD" id="cd01132">
    <property type="entry name" value="F1-ATPase_alpha_CD"/>
    <property type="match status" value="1"/>
</dbReference>
<dbReference type="FunFam" id="1.20.150.20:FF:000001">
    <property type="entry name" value="ATP synthase subunit alpha"/>
    <property type="match status" value="1"/>
</dbReference>
<dbReference type="FunFam" id="2.40.30.20:FF:000001">
    <property type="entry name" value="ATP synthase subunit alpha"/>
    <property type="match status" value="1"/>
</dbReference>
<dbReference type="FunFam" id="3.40.50.300:FF:002432">
    <property type="entry name" value="ATP synthase subunit alpha, mitochondrial"/>
    <property type="match status" value="1"/>
</dbReference>
<dbReference type="Gene3D" id="2.40.30.20">
    <property type="match status" value="1"/>
</dbReference>
<dbReference type="Gene3D" id="1.20.150.20">
    <property type="entry name" value="ATP synthase alpha/beta chain, C-terminal domain"/>
    <property type="match status" value="1"/>
</dbReference>
<dbReference type="Gene3D" id="3.40.50.300">
    <property type="entry name" value="P-loop containing nucleotide triphosphate hydrolases"/>
    <property type="match status" value="1"/>
</dbReference>
<dbReference type="HAMAP" id="MF_01346">
    <property type="entry name" value="ATP_synth_alpha_bact"/>
    <property type="match status" value="1"/>
</dbReference>
<dbReference type="InterPro" id="IPR023366">
    <property type="entry name" value="ATP_synth_asu-like_sf"/>
</dbReference>
<dbReference type="InterPro" id="IPR000793">
    <property type="entry name" value="ATP_synth_asu_C"/>
</dbReference>
<dbReference type="InterPro" id="IPR038376">
    <property type="entry name" value="ATP_synth_asu_C_sf"/>
</dbReference>
<dbReference type="InterPro" id="IPR033732">
    <property type="entry name" value="ATP_synth_F1_a_nt-bd_dom"/>
</dbReference>
<dbReference type="InterPro" id="IPR005294">
    <property type="entry name" value="ATP_synth_F1_asu"/>
</dbReference>
<dbReference type="InterPro" id="IPR020003">
    <property type="entry name" value="ATPase_a/bsu_AS"/>
</dbReference>
<dbReference type="InterPro" id="IPR004100">
    <property type="entry name" value="ATPase_F1/V1/A1_a/bsu_N"/>
</dbReference>
<dbReference type="InterPro" id="IPR036121">
    <property type="entry name" value="ATPase_F1/V1/A1_a/bsu_N_sf"/>
</dbReference>
<dbReference type="InterPro" id="IPR000194">
    <property type="entry name" value="ATPase_F1/V1/A1_a/bsu_nucl-bd"/>
</dbReference>
<dbReference type="InterPro" id="IPR027417">
    <property type="entry name" value="P-loop_NTPase"/>
</dbReference>
<dbReference type="NCBIfam" id="TIGR00962">
    <property type="entry name" value="atpA"/>
    <property type="match status" value="1"/>
</dbReference>
<dbReference type="NCBIfam" id="NF009884">
    <property type="entry name" value="PRK13343.1"/>
    <property type="match status" value="1"/>
</dbReference>
<dbReference type="PANTHER" id="PTHR48082">
    <property type="entry name" value="ATP SYNTHASE SUBUNIT ALPHA, MITOCHONDRIAL"/>
    <property type="match status" value="1"/>
</dbReference>
<dbReference type="PANTHER" id="PTHR48082:SF2">
    <property type="entry name" value="ATP SYNTHASE SUBUNIT ALPHA, MITOCHONDRIAL"/>
    <property type="match status" value="1"/>
</dbReference>
<dbReference type="Pfam" id="PF00006">
    <property type="entry name" value="ATP-synt_ab"/>
    <property type="match status" value="1"/>
</dbReference>
<dbReference type="Pfam" id="PF00306">
    <property type="entry name" value="ATP-synt_ab_C"/>
    <property type="match status" value="1"/>
</dbReference>
<dbReference type="Pfam" id="PF02874">
    <property type="entry name" value="ATP-synt_ab_N"/>
    <property type="match status" value="1"/>
</dbReference>
<dbReference type="PIRSF" id="PIRSF039088">
    <property type="entry name" value="F_ATPase_subunit_alpha"/>
    <property type="match status" value="1"/>
</dbReference>
<dbReference type="SUPFAM" id="SSF47917">
    <property type="entry name" value="C-terminal domain of alpha and beta subunits of F1 ATP synthase"/>
    <property type="match status" value="1"/>
</dbReference>
<dbReference type="SUPFAM" id="SSF50615">
    <property type="entry name" value="N-terminal domain of alpha and beta subunits of F1 ATP synthase"/>
    <property type="match status" value="1"/>
</dbReference>
<dbReference type="SUPFAM" id="SSF52540">
    <property type="entry name" value="P-loop containing nucleoside triphosphate hydrolases"/>
    <property type="match status" value="1"/>
</dbReference>
<dbReference type="PROSITE" id="PS00152">
    <property type="entry name" value="ATPASE_ALPHA_BETA"/>
    <property type="match status" value="1"/>
</dbReference>
<sequence length="511" mass="54952">MDIRPAEISDILKQQIASFDQVETVSETGTVLSIGDGIARVYGLTNVMAGEMVEFEGTGLKGMALNLEADNVGVVLFGDGDSIREGDTVLRTKSVVEVPVGKGLLGRVVDGLGNPIDGRGPLTDVEYRRAEVKAPGIMPRQSVSEPMQTGIKAIDALVPIGRGQRELIIGDRQTGKTAILIDTIVAQKPVNAEGDPKKSLYCIYVAVGQKRSTVANLVRTLIEHGAMEYSIVVAATASDAAPMQYLAPYTACAMGEYFRDNGMHALVCYDDLSKQAVAYRQMSLLLRRPPAREAFPGDVFYLHSRLLERAAKMSDANGGGSLTALPVIETQAGDTAAYIPTNVISITDGQIFLETDLFYRGIRPAVNVGGSVSRVGSAAQIKAMKQVAGKIKLELAQYREMAAFSQFASDLDAATRKQLDRGARLVELLKQPETSPLPVEEQVVVLYAGTRGYVDPIAVDKVVAYEAALLSELRGAGSDILTAIRNDRQIKPETEGKLKELLEAFGKRFSA</sequence>
<proteinExistence type="inferred from homology"/>
<protein>
    <recommendedName>
        <fullName evidence="1">ATP synthase subunit alpha 1</fullName>
        <ecNumber evidence="1">7.1.2.2</ecNumber>
    </recommendedName>
    <alternativeName>
        <fullName evidence="1">ATP synthase F1 sector subunit alpha 1</fullName>
    </alternativeName>
    <alternativeName>
        <fullName evidence="1">F-ATPase subunit alpha 1</fullName>
    </alternativeName>
</protein>